<organism>
    <name type="scientific">Bovine coronavirus (strain 98TXSF-110-LUN)</name>
    <name type="common">BCoV-LUN</name>
    <name type="synonym">BCV</name>
    <dbReference type="NCBI Taxonomy" id="233264"/>
    <lineage>
        <taxon>Viruses</taxon>
        <taxon>Riboviria</taxon>
        <taxon>Orthornavirae</taxon>
        <taxon>Pisuviricota</taxon>
        <taxon>Pisoniviricetes</taxon>
        <taxon>Nidovirales</taxon>
        <taxon>Cornidovirineae</taxon>
        <taxon>Coronaviridae</taxon>
        <taxon>Orthocoronavirinae</taxon>
        <taxon>Betacoronavirus</taxon>
        <taxon>Embecovirus</taxon>
        <taxon>Betacoronavirus 1</taxon>
    </lineage>
</organism>
<keyword id="KW-0175">Coiled coil</keyword>
<keyword id="KW-1015">Disulfide bond</keyword>
<keyword id="KW-1170">Fusion of virus membrane with host endosomal membrane</keyword>
<keyword id="KW-1168">Fusion of virus membrane with host membrane</keyword>
<keyword id="KW-0325">Glycoprotein</keyword>
<keyword id="KW-1032">Host cell membrane</keyword>
<keyword id="KW-1043">Host membrane</keyword>
<keyword id="KW-0945">Host-virus interaction</keyword>
<keyword id="KW-0449">Lipoprotein</keyword>
<keyword id="KW-0472">Membrane</keyword>
<keyword id="KW-0564">Palmitate</keyword>
<keyword id="KW-0732">Signal</keyword>
<keyword id="KW-0812">Transmembrane</keyword>
<keyword id="KW-1133">Transmembrane helix</keyword>
<keyword id="KW-1161">Viral attachment to host cell</keyword>
<keyword id="KW-0261">Viral envelope protein</keyword>
<keyword id="KW-1162">Viral penetration into host cytoplasm</keyword>
<keyword id="KW-0946">Virion</keyword>
<keyword id="KW-0843">Virulence</keyword>
<keyword id="KW-1160">Virus entry into host cell</keyword>
<organismHost>
    <name type="scientific">Bos taurus</name>
    <name type="common">Bovine</name>
    <dbReference type="NCBI Taxonomy" id="9913"/>
</organismHost>
<proteinExistence type="inferred from homology"/>
<feature type="signal peptide" evidence="2">
    <location>
        <begin position="1"/>
        <end position="13"/>
    </location>
</feature>
<feature type="chain" id="PRO_0000283913" description="Spike glycoprotein">
    <location>
        <begin position="14"/>
        <end position="1363"/>
    </location>
</feature>
<feature type="chain" id="PRO_0000283914" description="Spike protein S1">
    <location>
        <begin position="14"/>
        <end position="768"/>
    </location>
</feature>
<feature type="chain" id="PRO_0000283915" description="Spike protein S2">
    <location>
        <begin position="769"/>
        <end position="1363"/>
    </location>
</feature>
<feature type="chain" id="PRO_0000444072" description="Spike protein S2'" evidence="2">
    <location>
        <begin position="914"/>
        <end position="1363"/>
    </location>
</feature>
<feature type="topological domain" description="Extracellular" evidence="2">
    <location>
        <begin position="14"/>
        <end position="1307"/>
    </location>
</feature>
<feature type="transmembrane region" description="Helical" evidence="2">
    <location>
        <begin position="1308"/>
        <end position="1328"/>
    </location>
</feature>
<feature type="topological domain" description="Cytoplasmic" evidence="2">
    <location>
        <begin position="1329"/>
        <end position="1363"/>
    </location>
</feature>
<feature type="domain" description="BetaCoV S1-NTD" evidence="4">
    <location>
        <begin position="15"/>
        <end position="298"/>
    </location>
</feature>
<feature type="domain" description="BetaCoV S1-CTD" evidence="3">
    <location>
        <begin position="329"/>
        <end position="617"/>
    </location>
</feature>
<feature type="region of interest" description="Fusion peptide 1" evidence="2">
    <location>
        <begin position="914"/>
        <end position="935"/>
    </location>
</feature>
<feature type="region of interest" description="Fusion peptide 2" evidence="2">
    <location>
        <begin position="933"/>
        <end position="953"/>
    </location>
</feature>
<feature type="region of interest" description="Heptad repeat 1" evidence="2">
    <location>
        <begin position="1014"/>
        <end position="1064"/>
    </location>
</feature>
<feature type="region of interest" description="Heptad repeat 2" evidence="2">
    <location>
        <begin position="1258"/>
        <end position="1296"/>
    </location>
</feature>
<feature type="coiled-coil region" evidence="2">
    <location>
        <begin position="1043"/>
        <end position="1087"/>
    </location>
</feature>
<feature type="coiled-coil region" evidence="2">
    <location>
        <begin position="1269"/>
        <end position="1297"/>
    </location>
</feature>
<feature type="short sequence motif" description="KxHxx" evidence="2">
    <location>
        <begin position="1359"/>
        <end position="1363"/>
    </location>
</feature>
<feature type="site" description="Cleavage; by host" evidence="1">
    <location>
        <begin position="768"/>
        <end position="769"/>
    </location>
</feature>
<feature type="site" description="Cleavage" evidence="2">
    <location>
        <begin position="913"/>
        <end position="914"/>
    </location>
</feature>
<feature type="glycosylation site" description="N-linked (GlcNAc...) asparagine; by host" evidence="2">
    <location>
        <position position="59"/>
    </location>
</feature>
<feature type="glycosylation site" description="N-linked (GlcNAc...) asparagine; by host" evidence="2">
    <location>
        <position position="133"/>
    </location>
</feature>
<feature type="glycosylation site" description="N-linked (GlcNAc...) asparagine; by host" evidence="2">
    <location>
        <position position="198"/>
    </location>
</feature>
<feature type="glycosylation site" description="N-linked (GlcNAc...) asparagine; by host" evidence="2">
    <location>
        <position position="359"/>
    </location>
</feature>
<feature type="glycosylation site" description="N-linked (GlcNAc...) asparagine; by host" evidence="2">
    <location>
        <position position="437"/>
    </location>
</feature>
<feature type="glycosylation site" description="N-linked (GlcNAc...) asparagine; by host" evidence="2">
    <location>
        <position position="649"/>
    </location>
</feature>
<feature type="glycosylation site" description="N-linked (GlcNAc...) asparagine; by host" evidence="2">
    <location>
        <position position="676"/>
    </location>
</feature>
<feature type="glycosylation site" description="N-linked (GlcNAc...) asparagine; by host" evidence="2">
    <location>
        <position position="696"/>
    </location>
</feature>
<feature type="glycosylation site" description="N-linked (GlcNAc...) asparagine; by host" evidence="2">
    <location>
        <position position="714"/>
    </location>
</feature>
<feature type="glycosylation site" description="N-linked (GlcNAc...) asparagine; by host" evidence="2">
    <location>
        <position position="739"/>
    </location>
</feature>
<feature type="glycosylation site" description="N-linked (GlcNAc...) asparagine; by host" evidence="2">
    <location>
        <position position="788"/>
    </location>
</feature>
<feature type="glycosylation site" description="N-linked (GlcNAc...) asparagine; by host" evidence="2">
    <location>
        <position position="937"/>
    </location>
</feature>
<feature type="glycosylation site" description="N-linked (GlcNAc...) asparagine; by host" evidence="2">
    <location>
        <position position="1194"/>
    </location>
</feature>
<feature type="glycosylation site" description="N-linked (GlcNAc...) asparagine; by host" evidence="2">
    <location>
        <position position="1224"/>
    </location>
</feature>
<feature type="glycosylation site" description="N-linked (GlcNAc...) asparagine; by host" evidence="2">
    <location>
        <position position="1234"/>
    </location>
</feature>
<feature type="glycosylation site" description="N-linked (GlcNAc...) asparagine; by host" evidence="2">
    <location>
        <position position="1253"/>
    </location>
</feature>
<feature type="glycosylation site" description="N-linked (GlcNAc...) asparagine; by host" evidence="2">
    <location>
        <position position="1267"/>
    </location>
</feature>
<feature type="glycosylation site" description="N-linked (GlcNAc...) asparagine; by host" evidence="2">
    <location>
        <position position="1288"/>
    </location>
</feature>
<feature type="disulfide bond" evidence="4">
    <location>
        <begin position="21"/>
        <end position="165"/>
    </location>
</feature>
<feature type="disulfide bond" evidence="4">
    <location>
        <begin position="160"/>
        <end position="193"/>
    </location>
</feature>
<feature type="disulfide bond" evidence="4">
    <location>
        <begin position="172"/>
        <end position="252"/>
    </location>
</feature>
<feature type="disulfide bond" evidence="4">
    <location>
        <begin position="286"/>
        <end position="296"/>
    </location>
</feature>
<feature type="disulfide bond" evidence="3">
    <location>
        <begin position="331"/>
        <end position="356"/>
    </location>
</feature>
<feature type="disulfide bond" evidence="3">
    <location>
        <begin position="374"/>
        <end position="427"/>
    </location>
</feature>
<feature type="disulfide bond" evidence="3">
    <location>
        <begin position="386"/>
        <end position="615"/>
    </location>
</feature>
<feature type="disulfide bond" evidence="2">
    <location>
        <begin position="938"/>
        <end position="949"/>
    </location>
</feature>
<comment type="function">
    <molecule>Spike protein S1</molecule>
    <text evidence="2">Attaches the virion to the cell membrane by interacting with host receptor, initiating the infection.</text>
</comment>
<comment type="function">
    <molecule>Spike protein S2</molecule>
    <text evidence="2">Mediates fusion of the virion and cellular membranes by acting as a class I viral fusion protein. Under the current model, the protein has at least three conformational states: pre-fusion native state, pre-hairpin intermediate state, and post-fusion hairpin state. During viral and target cell membrane fusion, the coiled coil regions (heptad repeats) assume a trimer-of-hairpins structure, positioning the fusion peptide in close proximity to the C-terminal region of the ectodomain. The formation of this structure appears to drive apposition and subsequent fusion of viral and target cell membranes.</text>
</comment>
<comment type="function">
    <molecule>Spike protein S2'</molecule>
    <text evidence="2">Acts as a viral fusion peptide which is unmasked following S2 cleavage occurring upon virus endocytosis.</text>
</comment>
<comment type="subunit">
    <text evidence="2">Homotrimer; each monomer consists of a S1 and a S2 subunit. The resulting peplomers protrude from the virus surface as spikes.</text>
</comment>
<comment type="subcellular location">
    <subcellularLocation>
        <location evidence="2">Virion membrane</location>
        <topology evidence="2">Single-pass type I membrane protein</topology>
    </subcellularLocation>
    <subcellularLocation>
        <location evidence="2">Host endoplasmic reticulum-Golgi intermediate compartment membrane</location>
        <topology evidence="2">Single-pass type I membrane protein</topology>
    </subcellularLocation>
    <subcellularLocation>
        <location evidence="2">Host cell membrane</location>
        <topology evidence="2">Single-pass type I membrane protein</topology>
    </subcellularLocation>
    <text evidence="2">Accumulates in the endoplasmic reticulum-Golgi intermediate compartment, where it participates in virus particle assembly. Some S oligomers are transported to the host plasma membrane, where they may mediate cell-cell fusion.</text>
</comment>
<comment type="domain">
    <text evidence="2">Fusion peptide 1 (FP1) and fusion peptide 2 (FP2) function cooperatively and have a membrane-ordering effect on lipid headgroups and shallow hydrophobic regions of target bilayers. They are considered as two domains of an extended, bipartite FP. The membrane-ordering activity is calcium-dependent and also dependent on correct folding, which is maintained by an internal disulfide bond in FP2.</text>
</comment>
<comment type="PTM">
    <text evidence="2">Specific enzymatic cleavages in vivo yield mature proteins. The precursor is processed into S1 and S2 by host cell furin or another cellular protease to yield the mature S1 and S2 proteins. Additionally, a second cleavage leads to the release of a fusion peptide after viral attachment to host cell receptor.</text>
</comment>
<comment type="PTM">
    <text evidence="2">The cytoplasmic Cys-rich domain is palmitoylated. Spike glycoprotein is digested within host endosomes.</text>
</comment>
<comment type="similarity">
    <text evidence="2">Belongs to the betacoronaviruses spike protein family.</text>
</comment>
<name>SPIKE_CVBLU</name>
<evidence type="ECO:0000250" key="1"/>
<evidence type="ECO:0000255" key="2">
    <source>
        <dbReference type="HAMAP-Rule" id="MF_04099"/>
    </source>
</evidence>
<evidence type="ECO:0000255" key="3">
    <source>
        <dbReference type="PROSITE-ProRule" id="PRU01269"/>
    </source>
</evidence>
<evidence type="ECO:0000255" key="4">
    <source>
        <dbReference type="PROSITE-ProRule" id="PRU01270"/>
    </source>
</evidence>
<gene>
    <name evidence="2" type="primary">S</name>
    <name type="ORF">3</name>
</gene>
<reference key="1">
    <citation type="journal article" date="2001" name="J. Gen. Virol.">
        <title>Comparison of genomic and predicted amino acid sequences of respiratory and enteric bovine coronaviruses isolated from the same animal with fatal shipping pneumonia.</title>
        <authorList>
            <person name="Chouljenko V.N."/>
            <person name="Lin X.Q."/>
            <person name="Storz J."/>
            <person name="Kousoulas K.G."/>
            <person name="Gorbalenya A.E."/>
        </authorList>
    </citation>
    <scope>NUCLEOTIDE SEQUENCE [GENOMIC RNA]</scope>
</reference>
<dbReference type="EMBL" id="AF391542">
    <property type="protein sequence ID" value="AAL57308.1"/>
    <property type="molecule type" value="Genomic_RNA"/>
</dbReference>
<dbReference type="SMR" id="Q8V436"/>
<dbReference type="GlyCosmos" id="Q8V436">
    <property type="glycosylation" value="18 sites, No reported glycans"/>
</dbReference>
<dbReference type="Proteomes" id="UP000008571">
    <property type="component" value="Genome"/>
</dbReference>
<dbReference type="GO" id="GO:0044173">
    <property type="term" value="C:host cell endoplasmic reticulum-Golgi intermediate compartment membrane"/>
    <property type="evidence" value="ECO:0007669"/>
    <property type="project" value="UniProtKB-SubCell"/>
</dbReference>
<dbReference type="GO" id="GO:0020002">
    <property type="term" value="C:host cell plasma membrane"/>
    <property type="evidence" value="ECO:0007669"/>
    <property type="project" value="UniProtKB-SubCell"/>
</dbReference>
<dbReference type="GO" id="GO:0016020">
    <property type="term" value="C:membrane"/>
    <property type="evidence" value="ECO:0007669"/>
    <property type="project" value="UniProtKB-UniRule"/>
</dbReference>
<dbReference type="GO" id="GO:0019031">
    <property type="term" value="C:viral envelope"/>
    <property type="evidence" value="ECO:0007669"/>
    <property type="project" value="UniProtKB-UniRule"/>
</dbReference>
<dbReference type="GO" id="GO:0055036">
    <property type="term" value="C:virion membrane"/>
    <property type="evidence" value="ECO:0007669"/>
    <property type="project" value="UniProtKB-SubCell"/>
</dbReference>
<dbReference type="GO" id="GO:0075509">
    <property type="term" value="P:endocytosis involved in viral entry into host cell"/>
    <property type="evidence" value="ECO:0007669"/>
    <property type="project" value="UniProtKB-UniRule"/>
</dbReference>
<dbReference type="GO" id="GO:0039654">
    <property type="term" value="P:fusion of virus membrane with host endosome membrane"/>
    <property type="evidence" value="ECO:0007669"/>
    <property type="project" value="UniProtKB-UniRule"/>
</dbReference>
<dbReference type="GO" id="GO:0019064">
    <property type="term" value="P:fusion of virus membrane with host plasma membrane"/>
    <property type="evidence" value="ECO:0007669"/>
    <property type="project" value="UniProtKB-UniRule"/>
</dbReference>
<dbReference type="GO" id="GO:0046813">
    <property type="term" value="P:receptor-mediated virion attachment to host cell"/>
    <property type="evidence" value="ECO:0007669"/>
    <property type="project" value="UniProtKB-UniRule"/>
</dbReference>
<dbReference type="CDD" id="cd21485">
    <property type="entry name" value="HCoV-OC43-like_Spike_S1_RBD"/>
    <property type="match status" value="1"/>
</dbReference>
<dbReference type="CDD" id="cd22380">
    <property type="entry name" value="HKU1-CoV-like_Spike_SD1-2_S1-S2_S2"/>
    <property type="match status" value="1"/>
</dbReference>
<dbReference type="CDD" id="cd21625">
    <property type="entry name" value="MHV-like_Spike_S1_NTD"/>
    <property type="match status" value="1"/>
</dbReference>
<dbReference type="FunFam" id="1.20.5.300:FF:000003">
    <property type="entry name" value="Spike glycoprotein"/>
    <property type="match status" value="1"/>
</dbReference>
<dbReference type="FunFam" id="1.20.5.300:FF:000006">
    <property type="entry name" value="Spike glycoprotein"/>
    <property type="match status" value="1"/>
</dbReference>
<dbReference type="FunFam" id="2.60.120.960:FF:000002">
    <property type="entry name" value="Spike glycoprotein"/>
    <property type="match status" value="1"/>
</dbReference>
<dbReference type="FunFam" id="3.30.70.1840:FF:000003">
    <property type="entry name" value="Spike glycoprotein"/>
    <property type="match status" value="1"/>
</dbReference>
<dbReference type="Gene3D" id="1.20.5.300">
    <property type="match status" value="2"/>
</dbReference>
<dbReference type="Gene3D" id="3.30.70.1840">
    <property type="match status" value="1"/>
</dbReference>
<dbReference type="Gene3D" id="2.60.120.960">
    <property type="entry name" value="Spike glycoprotein, N-terminal domain"/>
    <property type="match status" value="1"/>
</dbReference>
<dbReference type="HAMAP" id="MF_04099">
    <property type="entry name" value="BETA_CORONA_SPIKE"/>
    <property type="match status" value="1"/>
</dbReference>
<dbReference type="InterPro" id="IPR032500">
    <property type="entry name" value="bCoV_S1_N"/>
</dbReference>
<dbReference type="InterPro" id="IPR042578">
    <property type="entry name" value="BETA_CORONA_SPIKE"/>
</dbReference>
<dbReference type="InterPro" id="IPR043607">
    <property type="entry name" value="CoV_S1_C"/>
</dbReference>
<dbReference type="InterPro" id="IPR043473">
    <property type="entry name" value="S2_sf_CoV"/>
</dbReference>
<dbReference type="InterPro" id="IPR043002">
    <property type="entry name" value="Spike_N_sf"/>
</dbReference>
<dbReference type="InterPro" id="IPR044339">
    <property type="entry name" value="Spike_S1_NTD_MHV-like"/>
</dbReference>
<dbReference type="InterPro" id="IPR018548">
    <property type="entry name" value="Spike_S1_RBD_bCoV"/>
</dbReference>
<dbReference type="InterPro" id="IPR044372">
    <property type="entry name" value="Spike_S1_RBD_HCoV-OC43-like"/>
</dbReference>
<dbReference type="InterPro" id="IPR036326">
    <property type="entry name" value="Spike_S1_RBD_sf_bCoV"/>
</dbReference>
<dbReference type="InterPro" id="IPR002552">
    <property type="entry name" value="Spike_S2_CoV"/>
</dbReference>
<dbReference type="InterPro" id="IPR043614">
    <property type="entry name" value="Spike_S2_CoV_C"/>
</dbReference>
<dbReference type="InterPro" id="IPR044873">
    <property type="entry name" value="Spike_S2_CoV_HR1"/>
</dbReference>
<dbReference type="InterPro" id="IPR044874">
    <property type="entry name" value="Spike_S2_CoV_HR2"/>
</dbReference>
<dbReference type="Pfam" id="PF16451">
    <property type="entry name" value="bCoV_S1_N"/>
    <property type="match status" value="1"/>
</dbReference>
<dbReference type="Pfam" id="PF09408">
    <property type="entry name" value="bCoV_S1_RBD"/>
    <property type="match status" value="1"/>
</dbReference>
<dbReference type="Pfam" id="PF19209">
    <property type="entry name" value="CoV_S1_C"/>
    <property type="match status" value="1"/>
</dbReference>
<dbReference type="Pfam" id="PF01601">
    <property type="entry name" value="CoV_S2"/>
    <property type="match status" value="1"/>
</dbReference>
<dbReference type="Pfam" id="PF19214">
    <property type="entry name" value="CoV_S2_C"/>
    <property type="match status" value="1"/>
</dbReference>
<dbReference type="SUPFAM" id="SSF111474">
    <property type="entry name" value="Coronavirus S2 glycoprotein"/>
    <property type="match status" value="2"/>
</dbReference>
<dbReference type="SUPFAM" id="SSF143587">
    <property type="entry name" value="SARS receptor-binding domain-like"/>
    <property type="match status" value="1"/>
</dbReference>
<dbReference type="PROSITE" id="PS51921">
    <property type="entry name" value="BCOV_S1_CTD"/>
    <property type="match status" value="1"/>
</dbReference>
<dbReference type="PROSITE" id="PS51922">
    <property type="entry name" value="BCOV_S1_NTD"/>
    <property type="match status" value="1"/>
</dbReference>
<dbReference type="PROSITE" id="PS51923">
    <property type="entry name" value="COV_S2_HR1"/>
    <property type="match status" value="1"/>
</dbReference>
<dbReference type="PROSITE" id="PS51924">
    <property type="entry name" value="COV_S2_HR2"/>
    <property type="match status" value="1"/>
</dbReference>
<sequence>MFLILLISLPTAFAVIGDLKCTTVSINDVDTGVPSISTDTVDVTKGLGTYYVLDRVYLNTTLLLNGYYPTSGSTYRNMALKGTLLLSTLWFKPPFLSDFTNGIFAKVKNTKVIKDGVMYSEFPAITIGSTFVNTSYSVVVQPHTTILGNKLQGFLEISVCQYTMCEYPNTICNPNLGNRRVELWHWDTGVVSCLYKRNFTYDVNADYLYFHFYQEGGTFYAYFTDTGVVTKFLFNVYLGTVLSHYYVMPLTCNSALTLEYWVTPLTSKQYLLAFNQDGVIFNAVDCKSDFMSEIKCKTLSIAPSTGVYELNGYTVQPIADVYRRIPNLPDCNIEAWLNDKSVPSPLNWERKTFSNCNFNMSSLMSFIQADSFTCNNIDAAKIYGMCFSSITIDKFAIPNGRKVDLQLGNLGYLQSFNYRIDTTATSCQLYYNLPAANVSVSRFNPSTWNRRFGFTEQSVFKPQPAGVFTDHDVVYAQHCFKAPTNFCPCKLDGSLCVGNGPGIDAGYKTSGIGTCPAGTNYLTCHNAAQCDCLCTPDPITSKATGPYKCPQTKYLVGIGEHCSGLAIKSDHCGGNPCTCQPQAFLGWSVDSCLQGDRCNIFANFILHDVNSGTTCSTDLQKSNTDIILGVCVNYDLYGITGQGIFVEVNATYYNSWQNLLYDSNGNLYGFRDYLTNRTFMIRSCYSGRVSAAFHANSSEPALLFRNIKCNYVFNNTLSRQLQPINYFDSYLGCVVNADNSTSSVVQTCDLTVGSGYCVDYSTKRRSRRSITTGYRFTNFEPFTVNSVNDSLEPVGGLYEIQIPSEFTIGNMEEFIQTSSPKVTIDCSAFVCGDYAACKSQLVEYGSFCDNINAILTEVNELLDTTQLQVANSLMNGVTLSTKLKDGVNFNVDDINFSPVLGCLGSDCNKVSSRSAIEDLLFSKVKLSDVGFVEAYNNCTGGAEIRDLICVQSYNGIKVLPPLLSENQISGYTLAATSASLFPPWSAAAGVPFYLNVQYRINGIGVTMDVLSQNQKLIANAFNNALGAIQEGFDATNSALVKIQAVVNANAETLNNLLQQLSNRFGAISSSLQEILSRLDALEAQAQIDRLINGRLTALNAYVSQQLSDSTLVKFSAAQAMEKVNECVKSQSSRINFCGNGNHIISLVQNAPYGLYFIHFSYVPTKYVTAKVSPGLCIAGGRGIAPKSGYFVNVNNTWMFTGSGYYYPEPITGNNVVVMSTCAVNYTKAPDVMLNISTPNLPDFKEELDQWFKNQTSVAPDLSLDYINVTFLDLQDEMNRLQEAIKVLNQSYINLKDIGTYEYYVKWPWYVWLLIGFAGVAMLVLLFFICCCTGCGTSCFKKCGGCCDDYTGHQELVIKTSHED</sequence>
<protein>
    <recommendedName>
        <fullName evidence="2">Spike glycoprotein</fullName>
        <shortName evidence="2">S glycoprotein</shortName>
    </recommendedName>
    <alternativeName>
        <fullName evidence="2">E2</fullName>
    </alternativeName>
    <alternativeName>
        <fullName evidence="2">Peplomer protein</fullName>
    </alternativeName>
    <component>
        <recommendedName>
            <fullName evidence="2">Spike protein S1</fullName>
        </recommendedName>
    </component>
    <component>
        <recommendedName>
            <fullName evidence="2">Spike protein S2</fullName>
        </recommendedName>
    </component>
    <component>
        <recommendedName>
            <fullName evidence="2">Spike protein S2'</fullName>
        </recommendedName>
    </component>
</protein>
<accession>Q8V436</accession>